<name>FIS1_EREGS</name>
<dbReference type="EMBL" id="AE016817">
    <property type="protein sequence ID" value="AAS51862.1"/>
    <property type="molecule type" value="Genomic_DNA"/>
</dbReference>
<dbReference type="RefSeq" id="NP_984038.1">
    <property type="nucleotide sequence ID" value="NM_209391.1"/>
</dbReference>
<dbReference type="SMR" id="Q75AI5"/>
<dbReference type="FunCoup" id="Q75AI5">
    <property type="interactions" value="715"/>
</dbReference>
<dbReference type="STRING" id="284811.Q75AI5"/>
<dbReference type="EnsemblFungi" id="AAS51862">
    <property type="protein sequence ID" value="AAS51862"/>
    <property type="gene ID" value="AGOS_ADL058W"/>
</dbReference>
<dbReference type="GeneID" id="4620180"/>
<dbReference type="KEGG" id="ago:AGOS_ADL058W"/>
<dbReference type="eggNOG" id="KOG3364">
    <property type="taxonomic scope" value="Eukaryota"/>
</dbReference>
<dbReference type="HOGENOM" id="CLU_104368_2_0_1"/>
<dbReference type="InParanoid" id="Q75AI5"/>
<dbReference type="OMA" id="QFNYAWG"/>
<dbReference type="OrthoDB" id="421154at2759"/>
<dbReference type="Proteomes" id="UP000000591">
    <property type="component" value="Chromosome IV"/>
</dbReference>
<dbReference type="GO" id="GO:0005741">
    <property type="term" value="C:mitochondrial outer membrane"/>
    <property type="evidence" value="ECO:0000318"/>
    <property type="project" value="GO_Central"/>
</dbReference>
<dbReference type="GO" id="GO:0005778">
    <property type="term" value="C:peroxisomal membrane"/>
    <property type="evidence" value="ECO:0000318"/>
    <property type="project" value="GO_Central"/>
</dbReference>
<dbReference type="GO" id="GO:0008289">
    <property type="term" value="F:lipid binding"/>
    <property type="evidence" value="ECO:0000318"/>
    <property type="project" value="GO_Central"/>
</dbReference>
<dbReference type="GO" id="GO:0060090">
    <property type="term" value="F:molecular adaptor activity"/>
    <property type="evidence" value="ECO:0000318"/>
    <property type="project" value="GO_Central"/>
</dbReference>
<dbReference type="GO" id="GO:0000266">
    <property type="term" value="P:mitochondrial fission"/>
    <property type="evidence" value="ECO:0000318"/>
    <property type="project" value="GO_Central"/>
</dbReference>
<dbReference type="GO" id="GO:0016559">
    <property type="term" value="P:peroxisome fission"/>
    <property type="evidence" value="ECO:0000318"/>
    <property type="project" value="GO_Central"/>
</dbReference>
<dbReference type="GO" id="GO:0090141">
    <property type="term" value="P:positive regulation of mitochondrial fission"/>
    <property type="evidence" value="ECO:0007669"/>
    <property type="project" value="EnsemblFungi"/>
</dbReference>
<dbReference type="CDD" id="cd12212">
    <property type="entry name" value="Fis1"/>
    <property type="match status" value="1"/>
</dbReference>
<dbReference type="FunFam" id="1.25.40.10:FF:000481">
    <property type="entry name" value="Mitochondrial fission 1 protein"/>
    <property type="match status" value="1"/>
</dbReference>
<dbReference type="Gene3D" id="1.25.40.10">
    <property type="entry name" value="Tetratricopeptide repeat domain"/>
    <property type="match status" value="1"/>
</dbReference>
<dbReference type="InterPro" id="IPR016543">
    <property type="entry name" value="Fis1"/>
</dbReference>
<dbReference type="InterPro" id="IPR033745">
    <property type="entry name" value="Fis1_cytosol"/>
</dbReference>
<dbReference type="InterPro" id="IPR028061">
    <property type="entry name" value="Fis1_TPR_C"/>
</dbReference>
<dbReference type="InterPro" id="IPR028058">
    <property type="entry name" value="Fis1_TPR_N"/>
</dbReference>
<dbReference type="InterPro" id="IPR011990">
    <property type="entry name" value="TPR-like_helical_dom_sf"/>
</dbReference>
<dbReference type="PANTHER" id="PTHR13247:SF0">
    <property type="entry name" value="MITOCHONDRIAL FISSION 1 PROTEIN"/>
    <property type="match status" value="1"/>
</dbReference>
<dbReference type="PANTHER" id="PTHR13247">
    <property type="entry name" value="TETRATRICOPEPTIDE REPEAT PROTEIN 11 TPR REPEAT PROTEIN 11"/>
    <property type="match status" value="1"/>
</dbReference>
<dbReference type="Pfam" id="PF14853">
    <property type="entry name" value="Fis1_TPR_C"/>
    <property type="match status" value="1"/>
</dbReference>
<dbReference type="Pfam" id="PF14852">
    <property type="entry name" value="Fis1_TPR_N"/>
    <property type="match status" value="1"/>
</dbReference>
<dbReference type="PIRSF" id="PIRSF008835">
    <property type="entry name" value="TPR_repeat_11_Fis1"/>
    <property type="match status" value="1"/>
</dbReference>
<dbReference type="SUPFAM" id="SSF48452">
    <property type="entry name" value="TPR-like"/>
    <property type="match status" value="1"/>
</dbReference>
<organism>
    <name type="scientific">Eremothecium gossypii (strain ATCC 10895 / CBS 109.51 / FGSC 9923 / NRRL Y-1056)</name>
    <name type="common">Yeast</name>
    <name type="synonym">Ashbya gossypii</name>
    <dbReference type="NCBI Taxonomy" id="284811"/>
    <lineage>
        <taxon>Eukaryota</taxon>
        <taxon>Fungi</taxon>
        <taxon>Dikarya</taxon>
        <taxon>Ascomycota</taxon>
        <taxon>Saccharomycotina</taxon>
        <taxon>Saccharomycetes</taxon>
        <taxon>Saccharomycetales</taxon>
        <taxon>Saccharomycetaceae</taxon>
        <taxon>Eremothecium</taxon>
    </lineage>
</organism>
<protein>
    <recommendedName>
        <fullName>Mitochondrial fission 1 protein</fullName>
    </recommendedName>
</protein>
<sequence length="155" mass="17048">MSNINFLPTIEDAYGALSAEQLDILRQQVLSEGGDIASIQSRFNYAWGLVKSHDAEDQRLGVKLLTDIYKESPMRRRESLYYLAIGCYKLGEYAMAKRYADALVAHEPDNAQARTLKAMVEQKIQTEGLKGAALVGAGLAAVAAAAGFLLRQRRP</sequence>
<gene>
    <name type="primary">FIS1</name>
    <name type="ordered locus">ADL058W</name>
</gene>
<feature type="chain" id="PRO_0000256177" description="Mitochondrial fission 1 protein">
    <location>
        <begin position="1"/>
        <end position="155"/>
    </location>
</feature>
<feature type="topological domain" description="Cytoplasmic" evidence="2">
    <location>
        <begin position="1"/>
        <end position="130"/>
    </location>
</feature>
<feature type="transmembrane region" description="Helical" evidence="2">
    <location>
        <begin position="131"/>
        <end position="150"/>
    </location>
</feature>
<feature type="topological domain" description="Mitochondrial intermembrane" evidence="2">
    <location>
        <begin position="151"/>
        <end position="155"/>
    </location>
</feature>
<feature type="repeat" description="TPR">
    <location>
        <begin position="77"/>
        <end position="110"/>
    </location>
</feature>
<comment type="function">
    <text evidence="1">Has a role in mitochondrial fission. Has a role in outer membrane fission but not matrix separation (By similarity).</text>
</comment>
<comment type="subcellular location">
    <subcellularLocation>
        <location evidence="1">Mitochondrion outer membrane</location>
        <topology evidence="1">Single-pass membrane protein</topology>
    </subcellularLocation>
</comment>
<comment type="domain">
    <text evidence="1">The C-terminus is required for mitochondrial localization, while the N-terminus is necessary for mitochondrial fission.</text>
</comment>
<comment type="similarity">
    <text evidence="3">Belongs to the FIS1 family.</text>
</comment>
<reference key="1">
    <citation type="journal article" date="2004" name="Science">
        <title>The Ashbya gossypii genome as a tool for mapping the ancient Saccharomyces cerevisiae genome.</title>
        <authorList>
            <person name="Dietrich F.S."/>
            <person name="Voegeli S."/>
            <person name="Brachat S."/>
            <person name="Lerch A."/>
            <person name="Gates K."/>
            <person name="Steiner S."/>
            <person name="Mohr C."/>
            <person name="Poehlmann R."/>
            <person name="Luedi P."/>
            <person name="Choi S."/>
            <person name="Wing R.A."/>
            <person name="Flavier A."/>
            <person name="Gaffney T.D."/>
            <person name="Philippsen P."/>
        </authorList>
    </citation>
    <scope>NUCLEOTIDE SEQUENCE [LARGE SCALE GENOMIC DNA]</scope>
    <source>
        <strain>ATCC 10895 / CBS 109.51 / FGSC 9923 / NRRL Y-1056</strain>
    </source>
</reference>
<reference key="2">
    <citation type="journal article" date="2013" name="G3 (Bethesda)">
        <title>Genomes of Ashbya fungi isolated from insects reveal four mating-type loci, numerous translocations, lack of transposons, and distinct gene duplications.</title>
        <authorList>
            <person name="Dietrich F.S."/>
            <person name="Voegeli S."/>
            <person name="Kuo S."/>
            <person name="Philippsen P."/>
        </authorList>
    </citation>
    <scope>GENOME REANNOTATION</scope>
    <source>
        <strain>ATCC 10895 / CBS 109.51 / FGSC 9923 / NRRL Y-1056</strain>
    </source>
</reference>
<keyword id="KW-0472">Membrane</keyword>
<keyword id="KW-0496">Mitochondrion</keyword>
<keyword id="KW-1000">Mitochondrion outer membrane</keyword>
<keyword id="KW-1185">Reference proteome</keyword>
<keyword id="KW-0677">Repeat</keyword>
<keyword id="KW-0802">TPR repeat</keyword>
<keyword id="KW-0812">Transmembrane</keyword>
<keyword id="KW-1133">Transmembrane helix</keyword>
<proteinExistence type="inferred from homology"/>
<accession>Q75AI5</accession>
<evidence type="ECO:0000250" key="1"/>
<evidence type="ECO:0000255" key="2"/>
<evidence type="ECO:0000305" key="3"/>